<reference key="1">
    <citation type="journal article" date="2001" name="Microb. Drug Resist.">
        <title>Annotated draft genomic sequence from a Streptococcus pneumoniae type 19F clinical isolate.</title>
        <authorList>
            <person name="Dopazo J."/>
            <person name="Mendoza A."/>
            <person name="Herrero J."/>
            <person name="Caldara F."/>
            <person name="Humbert Y."/>
            <person name="Friedli L."/>
            <person name="Guerrier M."/>
            <person name="Grand-Schenk E."/>
            <person name="Gandin C."/>
            <person name="de Francesco M."/>
            <person name="Polissi A."/>
            <person name="Buell G."/>
            <person name="Feger G."/>
            <person name="Garcia E."/>
            <person name="Peitsch M."/>
            <person name="Garcia-Bustos J.F."/>
        </authorList>
    </citation>
    <scope>NUCLEOTIDE SEQUENCE [LARGE SCALE GENOMIC DNA]</scope>
    <source>
        <strain>G54</strain>
    </source>
</reference>
<reference key="2">
    <citation type="submission" date="2008-03" db="EMBL/GenBank/DDBJ databases">
        <title>Pneumococcal beta glucoside metabolism investigated by whole genome comparison.</title>
        <authorList>
            <person name="Mulas L."/>
            <person name="Trappetti C."/>
            <person name="Hakenbeck R."/>
            <person name="Iannelli F."/>
            <person name="Pozzi G."/>
            <person name="Davidsen T.M."/>
            <person name="Tettelin H."/>
            <person name="Oggioni M."/>
        </authorList>
    </citation>
    <scope>NUCLEOTIDE SEQUENCE [LARGE SCALE GENOMIC DNA]</scope>
    <source>
        <strain>G54</strain>
    </source>
</reference>
<sequence>MHVTVGELIGNFILITGSFILLLVLIKKFAWSNITGIFEERAEKIASDIDRAEEARQKAEVLAQKREDELAGSRKEAKTIIENAKETAEQSKANILADAKLEAGHLKEKANQEIAQNKVEALQSVKGEVADLTISLAGKIISQNLDSHAHKALIDQYIDQLGEA</sequence>
<comment type="function">
    <text evidence="1">F(1)F(0) ATP synthase produces ATP from ADP in the presence of a proton or sodium gradient. F-type ATPases consist of two structural domains, F(1) containing the extramembraneous catalytic core and F(0) containing the membrane proton channel, linked together by a central stalk and a peripheral stalk. During catalysis, ATP synthesis in the catalytic domain of F(1) is coupled via a rotary mechanism of the central stalk subunits to proton translocation.</text>
</comment>
<comment type="function">
    <text evidence="1">Component of the F(0) channel, it forms part of the peripheral stalk, linking F(1) to F(0).</text>
</comment>
<comment type="subunit">
    <text evidence="1">F-type ATPases have 2 components, F(1) - the catalytic core - and F(0) - the membrane proton channel. F(1) has five subunits: alpha(3), beta(3), gamma(1), delta(1), epsilon(1). F(0) has three main subunits: a(1), b(2) and c(10-14). The alpha and beta chains form an alternating ring which encloses part of the gamma chain. F(1) is attached to F(0) by a central stalk formed by the gamma and epsilon chains, while a peripheral stalk is formed by the delta and b chains.</text>
</comment>
<comment type="subcellular location">
    <subcellularLocation>
        <location evidence="1">Cell membrane</location>
        <topology evidence="1">Single-pass membrane protein</topology>
    </subcellularLocation>
</comment>
<comment type="similarity">
    <text evidence="1">Belongs to the ATPase B chain family.</text>
</comment>
<dbReference type="EMBL" id="CP001015">
    <property type="protein sequence ID" value="ACF54860.1"/>
    <property type="molecule type" value="Genomic_DNA"/>
</dbReference>
<dbReference type="SMR" id="B5E675"/>
<dbReference type="KEGG" id="spx:SPG_1435"/>
<dbReference type="HOGENOM" id="CLU_079215_4_2_9"/>
<dbReference type="GO" id="GO:0005886">
    <property type="term" value="C:plasma membrane"/>
    <property type="evidence" value="ECO:0007669"/>
    <property type="project" value="UniProtKB-SubCell"/>
</dbReference>
<dbReference type="GO" id="GO:0045259">
    <property type="term" value="C:proton-transporting ATP synthase complex"/>
    <property type="evidence" value="ECO:0007669"/>
    <property type="project" value="UniProtKB-KW"/>
</dbReference>
<dbReference type="GO" id="GO:0046933">
    <property type="term" value="F:proton-transporting ATP synthase activity, rotational mechanism"/>
    <property type="evidence" value="ECO:0007669"/>
    <property type="project" value="UniProtKB-UniRule"/>
</dbReference>
<dbReference type="GO" id="GO:0046961">
    <property type="term" value="F:proton-transporting ATPase activity, rotational mechanism"/>
    <property type="evidence" value="ECO:0007669"/>
    <property type="project" value="TreeGrafter"/>
</dbReference>
<dbReference type="CDD" id="cd06503">
    <property type="entry name" value="ATP-synt_Fo_b"/>
    <property type="match status" value="1"/>
</dbReference>
<dbReference type="Gene3D" id="6.10.250.1580">
    <property type="match status" value="1"/>
</dbReference>
<dbReference type="HAMAP" id="MF_01398">
    <property type="entry name" value="ATP_synth_b_bprime"/>
    <property type="match status" value="1"/>
</dbReference>
<dbReference type="InterPro" id="IPR028987">
    <property type="entry name" value="ATP_synth_B-like_membr_sf"/>
</dbReference>
<dbReference type="InterPro" id="IPR002146">
    <property type="entry name" value="ATP_synth_b/b'su_bac/chlpt"/>
</dbReference>
<dbReference type="InterPro" id="IPR005864">
    <property type="entry name" value="ATP_synth_F0_bsu_bac"/>
</dbReference>
<dbReference type="InterPro" id="IPR050059">
    <property type="entry name" value="ATP_synthase_B_chain"/>
</dbReference>
<dbReference type="NCBIfam" id="TIGR01144">
    <property type="entry name" value="ATP_synt_b"/>
    <property type="match status" value="1"/>
</dbReference>
<dbReference type="PANTHER" id="PTHR33445:SF1">
    <property type="entry name" value="ATP SYNTHASE SUBUNIT B"/>
    <property type="match status" value="1"/>
</dbReference>
<dbReference type="PANTHER" id="PTHR33445">
    <property type="entry name" value="ATP SYNTHASE SUBUNIT B', CHLOROPLASTIC"/>
    <property type="match status" value="1"/>
</dbReference>
<dbReference type="Pfam" id="PF00430">
    <property type="entry name" value="ATP-synt_B"/>
    <property type="match status" value="1"/>
</dbReference>
<dbReference type="SUPFAM" id="SSF81573">
    <property type="entry name" value="F1F0 ATP synthase subunit B, membrane domain"/>
    <property type="match status" value="1"/>
</dbReference>
<gene>
    <name evidence="1" type="primary">atpF</name>
    <name type="ordered locus">SPG_1435</name>
</gene>
<name>ATPF_STRP4</name>
<proteinExistence type="inferred from homology"/>
<protein>
    <recommendedName>
        <fullName evidence="1">ATP synthase subunit b</fullName>
    </recommendedName>
    <alternativeName>
        <fullName evidence="1">ATP synthase F(0) sector subunit b</fullName>
    </alternativeName>
    <alternativeName>
        <fullName evidence="1">ATPase subunit I</fullName>
    </alternativeName>
    <alternativeName>
        <fullName evidence="1">F-type ATPase subunit b</fullName>
        <shortName evidence="1">F-ATPase subunit b</shortName>
    </alternativeName>
</protein>
<organism>
    <name type="scientific">Streptococcus pneumoniae serotype 19F (strain G54)</name>
    <dbReference type="NCBI Taxonomy" id="512566"/>
    <lineage>
        <taxon>Bacteria</taxon>
        <taxon>Bacillati</taxon>
        <taxon>Bacillota</taxon>
        <taxon>Bacilli</taxon>
        <taxon>Lactobacillales</taxon>
        <taxon>Streptococcaceae</taxon>
        <taxon>Streptococcus</taxon>
    </lineage>
</organism>
<accession>B5E675</accession>
<evidence type="ECO:0000255" key="1">
    <source>
        <dbReference type="HAMAP-Rule" id="MF_01398"/>
    </source>
</evidence>
<keyword id="KW-0066">ATP synthesis</keyword>
<keyword id="KW-1003">Cell membrane</keyword>
<keyword id="KW-0138">CF(0)</keyword>
<keyword id="KW-0375">Hydrogen ion transport</keyword>
<keyword id="KW-0406">Ion transport</keyword>
<keyword id="KW-0472">Membrane</keyword>
<keyword id="KW-0812">Transmembrane</keyword>
<keyword id="KW-1133">Transmembrane helix</keyword>
<keyword id="KW-0813">Transport</keyword>
<feature type="chain" id="PRO_0000368799" description="ATP synthase subunit b">
    <location>
        <begin position="1"/>
        <end position="164"/>
    </location>
</feature>
<feature type="transmembrane region" description="Helical" evidence="1">
    <location>
        <begin position="6"/>
        <end position="26"/>
    </location>
</feature>